<proteinExistence type="inferred from homology"/>
<keyword id="KW-0028">Amino-acid biosynthesis</keyword>
<keyword id="KW-0378">Hydrolase</keyword>
<keyword id="KW-0486">Methionine biosynthesis</keyword>
<comment type="function">
    <text evidence="1">Catalyzes the irreversible cleavage of the glycosidic bond in both 5'-methylthioadenosine (MTA) and S-adenosylhomocysteine (SAH/AdoHcy) to adenine and the corresponding thioribose, 5'-methylthioribose and S-ribosylhomocysteine, respectively. Also cleaves 5'-deoxyadenosine, a toxic by-product of radical S-adenosylmethionine (SAM) enzymes, into 5-deoxyribose and adenine.</text>
</comment>
<comment type="catalytic activity">
    <reaction evidence="1">
        <text>S-adenosyl-L-homocysteine + H2O = S-(5-deoxy-D-ribos-5-yl)-L-homocysteine + adenine</text>
        <dbReference type="Rhea" id="RHEA:17805"/>
        <dbReference type="ChEBI" id="CHEBI:15377"/>
        <dbReference type="ChEBI" id="CHEBI:16708"/>
        <dbReference type="ChEBI" id="CHEBI:57856"/>
        <dbReference type="ChEBI" id="CHEBI:58195"/>
        <dbReference type="EC" id="3.2.2.9"/>
    </reaction>
</comment>
<comment type="catalytic activity">
    <reaction evidence="1">
        <text>S-methyl-5'-thioadenosine + H2O = 5-(methylsulfanyl)-D-ribose + adenine</text>
        <dbReference type="Rhea" id="RHEA:13617"/>
        <dbReference type="ChEBI" id="CHEBI:15377"/>
        <dbReference type="ChEBI" id="CHEBI:16708"/>
        <dbReference type="ChEBI" id="CHEBI:17509"/>
        <dbReference type="ChEBI" id="CHEBI:78440"/>
        <dbReference type="EC" id="3.2.2.9"/>
    </reaction>
</comment>
<comment type="catalytic activity">
    <reaction evidence="1">
        <text>5'-deoxyadenosine + H2O = 5-deoxy-D-ribose + adenine</text>
        <dbReference type="Rhea" id="RHEA:29859"/>
        <dbReference type="ChEBI" id="CHEBI:15377"/>
        <dbReference type="ChEBI" id="CHEBI:16708"/>
        <dbReference type="ChEBI" id="CHEBI:17319"/>
        <dbReference type="ChEBI" id="CHEBI:149540"/>
        <dbReference type="EC" id="3.2.2.9"/>
    </reaction>
    <physiologicalReaction direction="left-to-right" evidence="1">
        <dbReference type="Rhea" id="RHEA:29860"/>
    </physiologicalReaction>
</comment>
<comment type="pathway">
    <text evidence="1">Amino-acid biosynthesis; L-methionine biosynthesis via salvage pathway; S-methyl-5-thio-alpha-D-ribose 1-phosphate from S-methyl-5'-thioadenosine (hydrolase route): step 1/2.</text>
</comment>
<comment type="similarity">
    <text evidence="1">Belongs to the PNP/UDP phosphorylase family. MtnN subfamily.</text>
</comment>
<accession>C1ESR9</accession>
<evidence type="ECO:0000255" key="1">
    <source>
        <dbReference type="HAMAP-Rule" id="MF_01684"/>
    </source>
</evidence>
<sequence length="231" mass="25255">MRIAVIGAMEEEVRILRDKLEQAETETVAGCEFTKGQLAGHEVILLKSGIGKVNAAMSTTILLERYKPEKVINTGSAGGFHHSLNVGDVVISTEVRHHDVDVTAFNYEYGQVPGMPPGFKADEALVALAEKCMQAEENIQVVKGMIATGDSFMSDPNRVAAIRDKFENLYAVEMEAAAVAQVCHQYEVPFVIIRALSDIAGKESNVSFDQFLDQAALHSTNFIVKVLEELK</sequence>
<reference key="1">
    <citation type="submission" date="2009-02" db="EMBL/GenBank/DDBJ databases">
        <title>Genome sequence of Bacillus cereus 03BB102.</title>
        <authorList>
            <person name="Dodson R.J."/>
            <person name="Jackson P."/>
            <person name="Munk A.C."/>
            <person name="Brettin T."/>
            <person name="Bruce D."/>
            <person name="Detter C."/>
            <person name="Tapia R."/>
            <person name="Han C."/>
            <person name="Sutton G."/>
            <person name="Sims D."/>
        </authorList>
    </citation>
    <scope>NUCLEOTIDE SEQUENCE [LARGE SCALE GENOMIC DNA]</scope>
    <source>
        <strain>03BB102</strain>
    </source>
</reference>
<protein>
    <recommendedName>
        <fullName evidence="1">5'-methylthioadenosine/S-adenosylhomocysteine nucleosidase</fullName>
        <shortName evidence="1">MTA/SAH nucleosidase</shortName>
        <shortName evidence="1">MTAN</shortName>
        <ecNumber evidence="1">3.2.2.9</ecNumber>
    </recommendedName>
    <alternativeName>
        <fullName evidence="1">5'-deoxyadenosine nucleosidase</fullName>
        <shortName evidence="1">DOA nucleosidase</shortName>
        <shortName evidence="1">dAdo nucleosidase</shortName>
    </alternativeName>
    <alternativeName>
        <fullName evidence="1">5'-methylthioadenosine nucleosidase</fullName>
        <shortName evidence="1">MTA nucleosidase</shortName>
    </alternativeName>
    <alternativeName>
        <fullName evidence="1">S-adenosylhomocysteine nucleosidase</fullName>
        <shortName evidence="1">AdoHcy nucleosidase</shortName>
        <shortName evidence="1">SAH nucleosidase</shortName>
        <shortName evidence="1">SRH nucleosidase</shortName>
    </alternativeName>
</protein>
<feature type="chain" id="PRO_1000187411" description="5'-methylthioadenosine/S-adenosylhomocysteine nucleosidase">
    <location>
        <begin position="1"/>
        <end position="231"/>
    </location>
</feature>
<feature type="active site" description="Proton acceptor" evidence="1">
    <location>
        <position position="12"/>
    </location>
</feature>
<feature type="active site" description="Proton donor" evidence="1">
    <location>
        <position position="198"/>
    </location>
</feature>
<feature type="binding site" evidence="1">
    <location>
        <position position="78"/>
    </location>
    <ligand>
        <name>substrate</name>
    </ligand>
</feature>
<feature type="binding site" evidence="1">
    <location>
        <position position="153"/>
    </location>
    <ligand>
        <name>substrate</name>
    </ligand>
</feature>
<feature type="binding site" evidence="1">
    <location>
        <begin position="174"/>
        <end position="175"/>
    </location>
    <ligand>
        <name>substrate</name>
    </ligand>
</feature>
<dbReference type="EC" id="3.2.2.9" evidence="1"/>
<dbReference type="EMBL" id="CP001407">
    <property type="protein sequence ID" value="ACO26068.1"/>
    <property type="molecule type" value="Genomic_DNA"/>
</dbReference>
<dbReference type="RefSeq" id="WP_001217039.1">
    <property type="nucleotide sequence ID" value="NZ_CP009318.1"/>
</dbReference>
<dbReference type="SMR" id="C1ESR9"/>
<dbReference type="GeneID" id="75087509"/>
<dbReference type="KEGG" id="bcx:BCA_4486"/>
<dbReference type="PATRIC" id="fig|572264.18.peg.4434"/>
<dbReference type="UniPathway" id="UPA00904">
    <property type="reaction ID" value="UER00871"/>
</dbReference>
<dbReference type="Proteomes" id="UP000002210">
    <property type="component" value="Chromosome"/>
</dbReference>
<dbReference type="GO" id="GO:0005829">
    <property type="term" value="C:cytosol"/>
    <property type="evidence" value="ECO:0007669"/>
    <property type="project" value="TreeGrafter"/>
</dbReference>
<dbReference type="GO" id="GO:0008782">
    <property type="term" value="F:adenosylhomocysteine nucleosidase activity"/>
    <property type="evidence" value="ECO:0007669"/>
    <property type="project" value="UniProtKB-UniRule"/>
</dbReference>
<dbReference type="GO" id="GO:0008930">
    <property type="term" value="F:methylthioadenosine nucleosidase activity"/>
    <property type="evidence" value="ECO:0007669"/>
    <property type="project" value="UniProtKB-UniRule"/>
</dbReference>
<dbReference type="GO" id="GO:0019509">
    <property type="term" value="P:L-methionine salvage from methylthioadenosine"/>
    <property type="evidence" value="ECO:0007669"/>
    <property type="project" value="UniProtKB-UniRule"/>
</dbReference>
<dbReference type="GO" id="GO:0019284">
    <property type="term" value="P:L-methionine salvage from S-adenosylmethionine"/>
    <property type="evidence" value="ECO:0007669"/>
    <property type="project" value="TreeGrafter"/>
</dbReference>
<dbReference type="GO" id="GO:0009164">
    <property type="term" value="P:nucleoside catabolic process"/>
    <property type="evidence" value="ECO:0007669"/>
    <property type="project" value="InterPro"/>
</dbReference>
<dbReference type="CDD" id="cd09008">
    <property type="entry name" value="MTAN"/>
    <property type="match status" value="1"/>
</dbReference>
<dbReference type="FunFam" id="3.40.50.1580:FF:000001">
    <property type="entry name" value="MTA/SAH nucleosidase family protein"/>
    <property type="match status" value="1"/>
</dbReference>
<dbReference type="Gene3D" id="3.40.50.1580">
    <property type="entry name" value="Nucleoside phosphorylase domain"/>
    <property type="match status" value="1"/>
</dbReference>
<dbReference type="HAMAP" id="MF_01684">
    <property type="entry name" value="Salvage_MtnN"/>
    <property type="match status" value="1"/>
</dbReference>
<dbReference type="InterPro" id="IPR010049">
    <property type="entry name" value="MTA_SAH_Nsdase"/>
</dbReference>
<dbReference type="InterPro" id="IPR000845">
    <property type="entry name" value="Nucleoside_phosphorylase_d"/>
</dbReference>
<dbReference type="InterPro" id="IPR035994">
    <property type="entry name" value="Nucleoside_phosphorylase_sf"/>
</dbReference>
<dbReference type="NCBIfam" id="TIGR01704">
    <property type="entry name" value="MTA_SAH-Nsdase"/>
    <property type="match status" value="1"/>
</dbReference>
<dbReference type="NCBIfam" id="NF004079">
    <property type="entry name" value="PRK05584.1"/>
    <property type="match status" value="1"/>
</dbReference>
<dbReference type="PANTHER" id="PTHR46832">
    <property type="entry name" value="5'-METHYLTHIOADENOSINE/S-ADENOSYLHOMOCYSTEINE NUCLEOSIDASE"/>
    <property type="match status" value="1"/>
</dbReference>
<dbReference type="PANTHER" id="PTHR46832:SF1">
    <property type="entry name" value="5'-METHYLTHIOADENOSINE_S-ADENOSYLHOMOCYSTEINE NUCLEOSIDASE"/>
    <property type="match status" value="1"/>
</dbReference>
<dbReference type="Pfam" id="PF01048">
    <property type="entry name" value="PNP_UDP_1"/>
    <property type="match status" value="1"/>
</dbReference>
<dbReference type="SUPFAM" id="SSF53167">
    <property type="entry name" value="Purine and uridine phosphorylases"/>
    <property type="match status" value="1"/>
</dbReference>
<organism>
    <name type="scientific">Bacillus cereus (strain 03BB102)</name>
    <dbReference type="NCBI Taxonomy" id="572264"/>
    <lineage>
        <taxon>Bacteria</taxon>
        <taxon>Bacillati</taxon>
        <taxon>Bacillota</taxon>
        <taxon>Bacilli</taxon>
        <taxon>Bacillales</taxon>
        <taxon>Bacillaceae</taxon>
        <taxon>Bacillus</taxon>
        <taxon>Bacillus cereus group</taxon>
    </lineage>
</organism>
<name>MTNN_BACC3</name>
<gene>
    <name evidence="1" type="primary">mtnN</name>
    <name type="ordered locus">BCA_4486</name>
</gene>